<protein>
    <recommendedName>
        <fullName evidence="1">Phosphopantetheine adenylyltransferase</fullName>
        <ecNumber evidence="1">2.7.7.3</ecNumber>
    </recommendedName>
    <alternativeName>
        <fullName evidence="1">Dephospho-CoA pyrophosphorylase</fullName>
    </alternativeName>
    <alternativeName>
        <fullName evidence="1">Pantetheine-phosphate adenylyltransferase</fullName>
        <shortName evidence="1">PPAT</shortName>
    </alternativeName>
</protein>
<proteinExistence type="inferred from homology"/>
<evidence type="ECO:0000255" key="1">
    <source>
        <dbReference type="HAMAP-Rule" id="MF_00151"/>
    </source>
</evidence>
<name>COAD_DEHMC</name>
<gene>
    <name evidence="1" type="primary">coaD</name>
    <name type="ordered locus">cbdbA197</name>
</gene>
<comment type="function">
    <text evidence="1">Reversibly transfers an adenylyl group from ATP to 4'-phosphopantetheine, yielding dephospho-CoA (dPCoA) and pyrophosphate.</text>
</comment>
<comment type="catalytic activity">
    <reaction evidence="1">
        <text>(R)-4'-phosphopantetheine + ATP + H(+) = 3'-dephospho-CoA + diphosphate</text>
        <dbReference type="Rhea" id="RHEA:19801"/>
        <dbReference type="ChEBI" id="CHEBI:15378"/>
        <dbReference type="ChEBI" id="CHEBI:30616"/>
        <dbReference type="ChEBI" id="CHEBI:33019"/>
        <dbReference type="ChEBI" id="CHEBI:57328"/>
        <dbReference type="ChEBI" id="CHEBI:61723"/>
        <dbReference type="EC" id="2.7.7.3"/>
    </reaction>
</comment>
<comment type="cofactor">
    <cofactor evidence="1">
        <name>Mg(2+)</name>
        <dbReference type="ChEBI" id="CHEBI:18420"/>
    </cofactor>
</comment>
<comment type="pathway">
    <text evidence="1">Cofactor biosynthesis; coenzyme A biosynthesis; CoA from (R)-pantothenate: step 4/5.</text>
</comment>
<comment type="subunit">
    <text evidence="1">Homohexamer.</text>
</comment>
<comment type="subcellular location">
    <subcellularLocation>
        <location evidence="1">Cytoplasm</location>
    </subcellularLocation>
</comment>
<comment type="similarity">
    <text evidence="1">Belongs to the bacterial CoaD family.</text>
</comment>
<keyword id="KW-0067">ATP-binding</keyword>
<keyword id="KW-0173">Coenzyme A biosynthesis</keyword>
<keyword id="KW-0963">Cytoplasm</keyword>
<keyword id="KW-0460">Magnesium</keyword>
<keyword id="KW-0547">Nucleotide-binding</keyword>
<keyword id="KW-0548">Nucleotidyltransferase</keyword>
<keyword id="KW-0808">Transferase</keyword>
<dbReference type="EC" id="2.7.7.3" evidence="1"/>
<dbReference type="EMBL" id="AJ965256">
    <property type="protein sequence ID" value="CAI82445.1"/>
    <property type="molecule type" value="Genomic_DNA"/>
</dbReference>
<dbReference type="RefSeq" id="WP_011308803.1">
    <property type="nucleotide sequence ID" value="NC_007356.1"/>
</dbReference>
<dbReference type="SMR" id="Q3ZWQ5"/>
<dbReference type="KEGG" id="deh:cbdbA197"/>
<dbReference type="HOGENOM" id="CLU_100149_1_1_0"/>
<dbReference type="UniPathway" id="UPA00241">
    <property type="reaction ID" value="UER00355"/>
</dbReference>
<dbReference type="Proteomes" id="UP000000433">
    <property type="component" value="Chromosome"/>
</dbReference>
<dbReference type="GO" id="GO:0005737">
    <property type="term" value="C:cytoplasm"/>
    <property type="evidence" value="ECO:0007669"/>
    <property type="project" value="UniProtKB-SubCell"/>
</dbReference>
<dbReference type="GO" id="GO:0005524">
    <property type="term" value="F:ATP binding"/>
    <property type="evidence" value="ECO:0007669"/>
    <property type="project" value="UniProtKB-KW"/>
</dbReference>
<dbReference type="GO" id="GO:0004595">
    <property type="term" value="F:pantetheine-phosphate adenylyltransferase activity"/>
    <property type="evidence" value="ECO:0007669"/>
    <property type="project" value="UniProtKB-UniRule"/>
</dbReference>
<dbReference type="GO" id="GO:0015937">
    <property type="term" value="P:coenzyme A biosynthetic process"/>
    <property type="evidence" value="ECO:0007669"/>
    <property type="project" value="UniProtKB-UniRule"/>
</dbReference>
<dbReference type="CDD" id="cd02163">
    <property type="entry name" value="PPAT"/>
    <property type="match status" value="1"/>
</dbReference>
<dbReference type="Gene3D" id="3.40.50.620">
    <property type="entry name" value="HUPs"/>
    <property type="match status" value="1"/>
</dbReference>
<dbReference type="HAMAP" id="MF_00151">
    <property type="entry name" value="PPAT_bact"/>
    <property type="match status" value="1"/>
</dbReference>
<dbReference type="InterPro" id="IPR004821">
    <property type="entry name" value="Cyt_trans-like"/>
</dbReference>
<dbReference type="InterPro" id="IPR001980">
    <property type="entry name" value="PPAT"/>
</dbReference>
<dbReference type="InterPro" id="IPR014729">
    <property type="entry name" value="Rossmann-like_a/b/a_fold"/>
</dbReference>
<dbReference type="NCBIfam" id="TIGR01510">
    <property type="entry name" value="coaD_prev_kdtB"/>
    <property type="match status" value="1"/>
</dbReference>
<dbReference type="NCBIfam" id="TIGR00125">
    <property type="entry name" value="cyt_tran_rel"/>
    <property type="match status" value="1"/>
</dbReference>
<dbReference type="PANTHER" id="PTHR21342">
    <property type="entry name" value="PHOSPHOPANTETHEINE ADENYLYLTRANSFERASE"/>
    <property type="match status" value="1"/>
</dbReference>
<dbReference type="PANTHER" id="PTHR21342:SF1">
    <property type="entry name" value="PHOSPHOPANTETHEINE ADENYLYLTRANSFERASE"/>
    <property type="match status" value="1"/>
</dbReference>
<dbReference type="Pfam" id="PF01467">
    <property type="entry name" value="CTP_transf_like"/>
    <property type="match status" value="1"/>
</dbReference>
<dbReference type="PRINTS" id="PR01020">
    <property type="entry name" value="LPSBIOSNTHSS"/>
</dbReference>
<dbReference type="SUPFAM" id="SSF52374">
    <property type="entry name" value="Nucleotidylyl transferase"/>
    <property type="match status" value="1"/>
</dbReference>
<accession>Q3ZWQ5</accession>
<reference key="1">
    <citation type="journal article" date="2005" name="Nat. Biotechnol.">
        <title>Genome sequence of the chlorinated compound-respiring bacterium Dehalococcoides species strain CBDB1.</title>
        <authorList>
            <person name="Kube M."/>
            <person name="Beck A."/>
            <person name="Zinder S.H."/>
            <person name="Kuhl H."/>
            <person name="Reinhardt R."/>
            <person name="Adrian L."/>
        </authorList>
    </citation>
    <scope>NUCLEOTIDE SEQUENCE [LARGE SCALE GENOMIC DNA]</scope>
    <source>
        <strain>CBDB1</strain>
    </source>
</reference>
<feature type="chain" id="PRO_1000011134" description="Phosphopantetheine adenylyltransferase">
    <location>
        <begin position="1"/>
        <end position="159"/>
    </location>
</feature>
<feature type="binding site" evidence="1">
    <location>
        <position position="16"/>
    </location>
    <ligand>
        <name>ATP</name>
        <dbReference type="ChEBI" id="CHEBI:30616"/>
    </ligand>
</feature>
<feature type="binding site" evidence="1">
    <location>
        <position position="40"/>
    </location>
    <ligand>
        <name>substrate</name>
    </ligand>
</feature>
<feature type="binding site" evidence="1">
    <location>
        <position position="72"/>
    </location>
    <ligand>
        <name>substrate</name>
    </ligand>
</feature>
<feature type="binding site" evidence="1">
    <location>
        <position position="86"/>
    </location>
    <ligand>
        <name>substrate</name>
    </ligand>
</feature>
<feature type="binding site" evidence="1">
    <location>
        <begin position="87"/>
        <end position="89"/>
    </location>
    <ligand>
        <name>ATP</name>
        <dbReference type="ChEBI" id="CHEBI:30616"/>
    </ligand>
</feature>
<feature type="binding site" evidence="1">
    <location>
        <position position="97"/>
    </location>
    <ligand>
        <name>ATP</name>
        <dbReference type="ChEBI" id="CHEBI:30616"/>
    </ligand>
</feature>
<feature type="binding site" evidence="1">
    <location>
        <begin position="122"/>
        <end position="128"/>
    </location>
    <ligand>
        <name>ATP</name>
        <dbReference type="ChEBI" id="CHEBI:30616"/>
    </ligand>
</feature>
<feature type="site" description="Transition state stabilizer" evidence="1">
    <location>
        <position position="16"/>
    </location>
</feature>
<organism>
    <name type="scientific">Dehalococcoides mccartyi (strain CBDB1)</name>
    <dbReference type="NCBI Taxonomy" id="255470"/>
    <lineage>
        <taxon>Bacteria</taxon>
        <taxon>Bacillati</taxon>
        <taxon>Chloroflexota</taxon>
        <taxon>Dehalococcoidia</taxon>
        <taxon>Dehalococcoidales</taxon>
        <taxon>Dehalococcoidaceae</taxon>
        <taxon>Dehalococcoides</taxon>
    </lineage>
</organism>
<sequence>MIAIYPGRFDPVTLGHLSVARRASGFCDRLIIAVFDNPAKPGLFTAAERVDFIKQSIKDFPNVEVRSFSGLMVNFARKMGASLIIRGLRVGADFEREMEMYVMNRRLDEGIELCCLFSEPQYQYLSASLIKEIVILGGDSSGLISEHVAVALKNKLASV</sequence>